<organism>
    <name type="scientific">Saimiriine herpesvirus 2 (strain 11)</name>
    <name type="common">SaHV-2</name>
    <name type="synonym">Herpesvirus saimiri</name>
    <dbReference type="NCBI Taxonomy" id="10383"/>
    <lineage>
        <taxon>Viruses</taxon>
        <taxon>Duplodnaviria</taxon>
        <taxon>Heunggongvirae</taxon>
        <taxon>Peploviricota</taxon>
        <taxon>Herviviricetes</taxon>
        <taxon>Herpesvirales</taxon>
        <taxon>Orthoherpesviridae</taxon>
        <taxon>Gammaherpesvirinae</taxon>
        <taxon>Rhadinovirus</taxon>
        <taxon>Rhadinovirus saimiriinegamma2</taxon>
        <taxon>Saimiriine herpesvirus 2</taxon>
    </lineage>
</organism>
<reference key="1">
    <citation type="journal article" date="1992" name="J. Virol.">
        <title>Primary structure of the herpesvirus saimiri genome.</title>
        <authorList>
            <person name="Albrecht J.-C."/>
            <person name="Nicholas J."/>
            <person name="Biller D."/>
            <person name="Cameron K.R."/>
            <person name="Biesinger B."/>
            <person name="Newman C."/>
            <person name="Wittmann S."/>
            <person name="Craxton M.A."/>
            <person name="Coleman H."/>
            <person name="Fleckenstein B."/>
            <person name="Honess R.W."/>
        </authorList>
    </citation>
    <scope>NUCLEOTIDE SEQUENCE [LARGE SCALE GENOMIC DNA]</scope>
</reference>
<accession>Q01031</accession>
<dbReference type="EMBL" id="X64346">
    <property type="protein sequence ID" value="CAA45670.1"/>
    <property type="molecule type" value="Genomic_DNA"/>
</dbReference>
<dbReference type="RefSeq" id="NP_040249.1">
    <property type="nucleotide sequence ID" value="NC_001350.1"/>
</dbReference>
<dbReference type="SMR" id="Q01031"/>
<dbReference type="KEGG" id="vg:1682452"/>
<dbReference type="Proteomes" id="UP000000587">
    <property type="component" value="Segment"/>
</dbReference>
<dbReference type="GO" id="GO:0044177">
    <property type="term" value="C:host cell Golgi apparatus"/>
    <property type="evidence" value="ECO:0007669"/>
    <property type="project" value="UniProtKB-SubCell"/>
</dbReference>
<dbReference type="GO" id="GO:0020002">
    <property type="term" value="C:host cell plasma membrane"/>
    <property type="evidence" value="ECO:0007669"/>
    <property type="project" value="UniProtKB-SubCell"/>
</dbReference>
<dbReference type="GO" id="GO:0016020">
    <property type="term" value="C:membrane"/>
    <property type="evidence" value="ECO:0007669"/>
    <property type="project" value="UniProtKB-KW"/>
</dbReference>
<dbReference type="GO" id="GO:0019031">
    <property type="term" value="C:viral envelope"/>
    <property type="evidence" value="ECO:0007669"/>
    <property type="project" value="UniProtKB-KW"/>
</dbReference>
<dbReference type="GO" id="GO:0055036">
    <property type="term" value="C:virion membrane"/>
    <property type="evidence" value="ECO:0007669"/>
    <property type="project" value="UniProtKB-SubCell"/>
</dbReference>
<dbReference type="GO" id="GO:0019064">
    <property type="term" value="P:fusion of virus membrane with host plasma membrane"/>
    <property type="evidence" value="ECO:0007669"/>
    <property type="project" value="UniProtKB-KW"/>
</dbReference>
<dbReference type="GO" id="GO:0046718">
    <property type="term" value="P:symbiont entry into host cell"/>
    <property type="evidence" value="ECO:0007669"/>
    <property type="project" value="UniProtKB-KW"/>
</dbReference>
<dbReference type="Gene3D" id="3.10.390.20">
    <property type="entry name" value="Viral glycoprotein L"/>
    <property type="match status" value="1"/>
</dbReference>
<dbReference type="HAMAP" id="MF_04034">
    <property type="entry name" value="HSV_GL_alphagamma"/>
    <property type="match status" value="1"/>
</dbReference>
<dbReference type="InterPro" id="IPR020175">
    <property type="entry name" value="Herpes_gL_rhadinovirus"/>
</dbReference>
<dbReference type="InterPro" id="IPR038313">
    <property type="entry name" value="Herpes_gL_rhadinovirus_sf"/>
</dbReference>
<dbReference type="InterPro" id="IPR034708">
    <property type="entry name" value="HSV_GL_alphagamma"/>
</dbReference>
<dbReference type="Pfam" id="PF11108">
    <property type="entry name" value="Phage_glycop_gL"/>
    <property type="match status" value="1"/>
</dbReference>
<sequence length="141" mass="16000">MKWLLGAYVCLCLANILNALIPNPCCNVFALNETLIPSIYDINWIYITDPQTCKGVSVAQVFQRRTAQHMSTRYVCSNGFNVISFLLAVLRKLPLNTEEYNFKNRLITLQNSFLSKLGPDTTSAIKFKSKYGQLAKTRNLE</sequence>
<name>GL_SHV21</name>
<organismHost>
    <name type="scientific">Saimiri sciureus</name>
    <name type="common">Common squirrel monkey</name>
    <dbReference type="NCBI Taxonomy" id="9521"/>
</organismHost>
<evidence type="ECO:0000255" key="1">
    <source>
        <dbReference type="HAMAP-Rule" id="MF_04034"/>
    </source>
</evidence>
<keyword id="KW-1169">Fusion of virus membrane with host cell membrane</keyword>
<keyword id="KW-1168">Fusion of virus membrane with host membrane</keyword>
<keyword id="KW-0325">Glycoprotein</keyword>
<keyword id="KW-1032">Host cell membrane</keyword>
<keyword id="KW-1040">Host Golgi apparatus</keyword>
<keyword id="KW-1043">Host membrane</keyword>
<keyword id="KW-0472">Membrane</keyword>
<keyword id="KW-1185">Reference proteome</keyword>
<keyword id="KW-0732">Signal</keyword>
<keyword id="KW-0261">Viral envelope protein</keyword>
<keyword id="KW-1162">Viral penetration into host cytoplasm</keyword>
<keyword id="KW-0946">Virion</keyword>
<keyword id="KW-1160">Virus entry into host cell</keyword>
<comment type="function">
    <text evidence="1">The heterodimer glycoprotein H-glycoprotein L is required for the fusion of viral and plasma membranes leading to virus entry into the host cell. Acts as a functional inhibitor of gH and maintains gH in an inhibited form. Upon binding to host integrins, gL dissociates from gH leading to activation of the viral fusion glycoproteins gB and gH.</text>
</comment>
<comment type="subunit">
    <text evidence="1">Interacts with glycoprotein H (gH); this interaction is necessary for the correct processing and cell surface expression of gH. The heterodimer gH/gL seems to interact with gB trimers during fusion.</text>
</comment>
<comment type="subcellular location">
    <subcellularLocation>
        <location evidence="1">Virion membrane</location>
        <topology evidence="1">Peripheral membrane protein</topology>
        <orientation evidence="1">Extracellular side</orientation>
    </subcellularLocation>
    <subcellularLocation>
        <location evidence="1">Host cell membrane</location>
        <topology evidence="1">Peripheral membrane protein</topology>
        <orientation evidence="1">Extracellular side</orientation>
    </subcellularLocation>
    <subcellularLocation>
        <location evidence="1">Host Golgi apparatus</location>
        <location evidence="1">Host trans-Golgi network</location>
    </subcellularLocation>
    <text evidence="1">gL associates with the extravirion surface through its binding to gH. During virion morphogenesis, this protein probably accumulates in the host trans-Golgi where secondary envelopment occurs.</text>
</comment>
<comment type="similarity">
    <text evidence="1">Belongs to the herpesviridae glycoprotein L family.</text>
</comment>
<gene>
    <name evidence="1" type="primary">gL</name>
    <name type="synonym">47</name>
</gene>
<feature type="signal peptide" evidence="1">
    <location>
        <begin position="1"/>
        <end position="19"/>
    </location>
</feature>
<feature type="chain" id="PRO_0000038274" description="Envelope glycoprotein L" evidence="1">
    <location>
        <begin position="20"/>
        <end position="141"/>
    </location>
</feature>
<feature type="region of interest" description="Interaction with gH" evidence="1">
    <location>
        <begin position="21"/>
        <end position="131"/>
    </location>
</feature>
<protein>
    <recommendedName>
        <fullName evidence="1">Envelope glycoprotein L</fullName>
        <shortName evidence="1">gL</shortName>
    </recommendedName>
</protein>
<proteinExistence type="inferred from homology"/>